<proteinExistence type="evidence at transcript level"/>
<evidence type="ECO:0000250" key="1">
    <source>
        <dbReference type="UniProtKB" id="O75608"/>
    </source>
</evidence>
<evidence type="ECO:0000250" key="2">
    <source>
        <dbReference type="UniProtKB" id="P70470"/>
    </source>
</evidence>
<evidence type="ECO:0000250" key="3">
    <source>
        <dbReference type="UniProtKB" id="P97823"/>
    </source>
</evidence>
<evidence type="ECO:0000305" key="4"/>
<feature type="chain" id="PRO_0000238675" description="Acyl-protein thioesterase 1">
    <location>
        <begin position="1"/>
        <end position="230"/>
    </location>
</feature>
<feature type="active site" description="Charge relay system" evidence="1">
    <location>
        <position position="119"/>
    </location>
</feature>
<feature type="active site" description="Charge relay system" evidence="1">
    <location>
        <position position="174"/>
    </location>
</feature>
<feature type="active site" description="Charge relay system" evidence="1">
    <location>
        <position position="208"/>
    </location>
</feature>
<feature type="modified residue" description="N6-acetyllysine" evidence="3">
    <location>
        <position position="224"/>
    </location>
</feature>
<reference key="1">
    <citation type="submission" date="2004-11" db="EMBL/GenBank/DDBJ databases">
        <authorList>
            <consortium name="The German cDNA consortium"/>
        </authorList>
    </citation>
    <scope>NUCLEOTIDE SEQUENCE [LARGE SCALE MRNA]</scope>
    <source>
        <tissue>Brain cortex</tissue>
    </source>
</reference>
<gene>
    <name type="primary">LYPLA1</name>
</gene>
<comment type="function">
    <text evidence="1 2">Acts as an acyl-protein thioesterase. Hydrolyzes fatty acids from S-acylated cysteine residues in proteins such as trimeric G alpha proteins or HRAS. Acts as a palmitoyl thioesterase that catalyzes depalmitoylation of proteins, such as ADRB2, KCNMA1 and SQSTM1. Acts as a negative regulator of autophagy by mediating palmitoylation of SQSTM1, decreasing affinity between SQSTM1 and ATG8 proteins and recruitment of ubiquitinated cargo proteins to autophagosomes. Acts as a lysophospholipase and hydrolyzes lysophosphatidylcholine (lyso-PC) (By similarity). Also hydrolyzes lysophosphatidylethanolamine (lyso-PE), lysophosphatidylinositol (lyso-PI) and lysophosphatidylserine (lyso-PS) (By similarity). Has much higher thioesterase activity than lysophospholipase activity. Contributes to the production of lysophosphatidic acid (LPA) during blood coagulation by recognizing and cleaving plasma phospholipids to generate lysophospholipids which in turn act as substrates for ENPP2 to produce LPA (By similarity).</text>
</comment>
<comment type="catalytic activity">
    <reaction evidence="1">
        <text>S-hexadecanoyl-L-cysteinyl-[protein] + H2O = L-cysteinyl-[protein] + hexadecanoate + H(+)</text>
        <dbReference type="Rhea" id="RHEA:19233"/>
        <dbReference type="Rhea" id="RHEA-COMP:10131"/>
        <dbReference type="Rhea" id="RHEA-COMP:11032"/>
        <dbReference type="ChEBI" id="CHEBI:7896"/>
        <dbReference type="ChEBI" id="CHEBI:15377"/>
        <dbReference type="ChEBI" id="CHEBI:15378"/>
        <dbReference type="ChEBI" id="CHEBI:29950"/>
        <dbReference type="ChEBI" id="CHEBI:74151"/>
        <dbReference type="EC" id="3.1.2.22"/>
    </reaction>
</comment>
<comment type="catalytic activity">
    <reaction evidence="1">
        <text>1-hexadecanoyl-sn-glycero-3-phosphocholine + H2O = sn-glycerol 3-phosphocholine + hexadecanoate + H(+)</text>
        <dbReference type="Rhea" id="RHEA:40435"/>
        <dbReference type="ChEBI" id="CHEBI:7896"/>
        <dbReference type="ChEBI" id="CHEBI:15377"/>
        <dbReference type="ChEBI" id="CHEBI:15378"/>
        <dbReference type="ChEBI" id="CHEBI:16870"/>
        <dbReference type="ChEBI" id="CHEBI:72998"/>
    </reaction>
    <physiologicalReaction direction="left-to-right" evidence="1">
        <dbReference type="Rhea" id="RHEA:40436"/>
    </physiologicalReaction>
</comment>
<comment type="catalytic activity">
    <reaction evidence="1">
        <text>a 1-(9Z-octadecenoyl)-2-acyl-sn-glycero-3-phosphocholine + H2O = a 2-acyl-sn-glycero-3-phosphocholine + (9Z)-octadecenoate + H(+)</text>
        <dbReference type="Rhea" id="RHEA:41720"/>
        <dbReference type="ChEBI" id="CHEBI:15377"/>
        <dbReference type="ChEBI" id="CHEBI:15378"/>
        <dbReference type="ChEBI" id="CHEBI:30823"/>
        <dbReference type="ChEBI" id="CHEBI:57875"/>
        <dbReference type="ChEBI" id="CHEBI:78421"/>
    </reaction>
    <physiologicalReaction direction="left-to-right" evidence="1">
        <dbReference type="Rhea" id="RHEA:41721"/>
    </physiologicalReaction>
</comment>
<comment type="subunit">
    <text evidence="1">Homodimer.</text>
</comment>
<comment type="subcellular location">
    <subcellularLocation>
        <location evidence="1">Cytoplasm</location>
    </subcellularLocation>
    <subcellularLocation>
        <location evidence="1">Cell membrane</location>
    </subcellularLocation>
    <subcellularLocation>
        <location evidence="1">Nucleus membrane</location>
    </subcellularLocation>
    <subcellularLocation>
        <location evidence="1">Endoplasmic reticulum</location>
    </subcellularLocation>
    <text evidence="1">Shows predominantly a cytoplasmic localization with a weak expression in the cell membrane, nuclear membrane and endoplasmic reticulum.</text>
</comment>
<comment type="similarity">
    <text evidence="4">Belongs to the AB hydrolase superfamily. AB hydrolase 2 family.</text>
</comment>
<protein>
    <recommendedName>
        <fullName>Acyl-protein thioesterase 1</fullName>
        <shortName>APT-1</shortName>
        <ecNumber>3.1.2.-</ecNumber>
    </recommendedName>
    <alternativeName>
        <fullName>Lysophospholipase 1</fullName>
    </alternativeName>
    <alternativeName>
        <fullName>Lysophospholipase I</fullName>
        <shortName>LPL-I</shortName>
        <shortName>LysoPLA I</shortName>
    </alternativeName>
    <alternativeName>
        <fullName evidence="4">Palmitoyl-protein hydrolase</fullName>
        <ecNumber evidence="1">3.1.2.22</ecNumber>
    </alternativeName>
</protein>
<organism>
    <name type="scientific">Pongo abelii</name>
    <name type="common">Sumatran orangutan</name>
    <name type="synonym">Pongo pygmaeus abelii</name>
    <dbReference type="NCBI Taxonomy" id="9601"/>
    <lineage>
        <taxon>Eukaryota</taxon>
        <taxon>Metazoa</taxon>
        <taxon>Chordata</taxon>
        <taxon>Craniata</taxon>
        <taxon>Vertebrata</taxon>
        <taxon>Euteleostomi</taxon>
        <taxon>Mammalia</taxon>
        <taxon>Eutheria</taxon>
        <taxon>Euarchontoglires</taxon>
        <taxon>Primates</taxon>
        <taxon>Haplorrhini</taxon>
        <taxon>Catarrhini</taxon>
        <taxon>Hominidae</taxon>
        <taxon>Pongo</taxon>
    </lineage>
</organism>
<sequence>MCGNNMSTPLPAIVPAARKATAAVIFLHGLGDTGHGWAEAFAGIRSSHIKYICPHAPVRPVTLNMNMAMPSWFDIIGLSPDSQEDESGIKQAAENIKALIDQEVKNGIPSNRIILGGFSQGGALSLYTALTTQQKLAGVTALSCWLPLRASFPQGPIGGANRDISILQCHGDCDPLVPLMFGSLTVEKLKTLVNPANVTFKTYEGMMHSSCQQEMMDVKQFIDKLLPPID</sequence>
<keyword id="KW-0007">Acetylation</keyword>
<keyword id="KW-1003">Cell membrane</keyword>
<keyword id="KW-0963">Cytoplasm</keyword>
<keyword id="KW-0256">Endoplasmic reticulum</keyword>
<keyword id="KW-0276">Fatty acid metabolism</keyword>
<keyword id="KW-0378">Hydrolase</keyword>
<keyword id="KW-0443">Lipid metabolism</keyword>
<keyword id="KW-0472">Membrane</keyword>
<keyword id="KW-0539">Nucleus</keyword>
<keyword id="KW-1185">Reference proteome</keyword>
<accession>Q5RBR7</accession>
<name>LYPA1_PONAB</name>
<dbReference type="EC" id="3.1.2.-"/>
<dbReference type="EC" id="3.1.2.22" evidence="1"/>
<dbReference type="EMBL" id="CR858568">
    <property type="protein sequence ID" value="CAH90793.1"/>
    <property type="molecule type" value="mRNA"/>
</dbReference>
<dbReference type="RefSeq" id="NP_001125450.1">
    <property type="nucleotide sequence ID" value="NM_001131978.1"/>
</dbReference>
<dbReference type="SMR" id="Q5RBR7"/>
<dbReference type="FunCoup" id="Q5RBR7">
    <property type="interactions" value="2611"/>
</dbReference>
<dbReference type="STRING" id="9601.ENSPPYP00000020848"/>
<dbReference type="ESTHER" id="ponpy-lypa1">
    <property type="family name" value="LYsophospholipase_carboxylesterase"/>
</dbReference>
<dbReference type="MEROPS" id="S09.941"/>
<dbReference type="GeneID" id="100172358"/>
<dbReference type="KEGG" id="pon:100172358"/>
<dbReference type="CTD" id="10434"/>
<dbReference type="eggNOG" id="KOG2112">
    <property type="taxonomic scope" value="Eukaryota"/>
</dbReference>
<dbReference type="InParanoid" id="Q5RBR7"/>
<dbReference type="OrthoDB" id="2418081at2759"/>
<dbReference type="Proteomes" id="UP000001595">
    <property type="component" value="Unplaced"/>
</dbReference>
<dbReference type="GO" id="GO:0005737">
    <property type="term" value="C:cytoplasm"/>
    <property type="evidence" value="ECO:0000250"/>
    <property type="project" value="UniProtKB"/>
</dbReference>
<dbReference type="GO" id="GO:0005783">
    <property type="term" value="C:endoplasmic reticulum"/>
    <property type="evidence" value="ECO:0000250"/>
    <property type="project" value="UniProtKB"/>
</dbReference>
<dbReference type="GO" id="GO:0031965">
    <property type="term" value="C:nuclear membrane"/>
    <property type="evidence" value="ECO:0000250"/>
    <property type="project" value="UniProtKB"/>
</dbReference>
<dbReference type="GO" id="GO:0005886">
    <property type="term" value="C:plasma membrane"/>
    <property type="evidence" value="ECO:0000250"/>
    <property type="project" value="UniProtKB"/>
</dbReference>
<dbReference type="GO" id="GO:0004622">
    <property type="term" value="F:lysophospholipase activity"/>
    <property type="evidence" value="ECO:0000250"/>
    <property type="project" value="UniProtKB"/>
</dbReference>
<dbReference type="GO" id="GO:0008474">
    <property type="term" value="F:palmitoyl-(protein) hydrolase activity"/>
    <property type="evidence" value="ECO:0000250"/>
    <property type="project" value="UniProtKB"/>
</dbReference>
<dbReference type="GO" id="GO:0004620">
    <property type="term" value="F:phospholipase activity"/>
    <property type="evidence" value="ECO:0000250"/>
    <property type="project" value="UniProtKB"/>
</dbReference>
<dbReference type="GO" id="GO:0006631">
    <property type="term" value="P:fatty acid metabolic process"/>
    <property type="evidence" value="ECO:0007669"/>
    <property type="project" value="UniProtKB-KW"/>
</dbReference>
<dbReference type="GO" id="GO:0002084">
    <property type="term" value="P:protein depalmitoylation"/>
    <property type="evidence" value="ECO:0000250"/>
    <property type="project" value="UniProtKB"/>
</dbReference>
<dbReference type="FunFam" id="3.40.50.1820:FF:000010">
    <property type="entry name" value="Acyl-protein thioesterase 2"/>
    <property type="match status" value="1"/>
</dbReference>
<dbReference type="Gene3D" id="3.40.50.1820">
    <property type="entry name" value="alpha/beta hydrolase"/>
    <property type="match status" value="1"/>
</dbReference>
<dbReference type="InterPro" id="IPR029058">
    <property type="entry name" value="AB_hydrolase_fold"/>
</dbReference>
<dbReference type="InterPro" id="IPR050565">
    <property type="entry name" value="LYPA1-2/EST-like"/>
</dbReference>
<dbReference type="InterPro" id="IPR003140">
    <property type="entry name" value="PLipase/COase/thioEstase"/>
</dbReference>
<dbReference type="PANTHER" id="PTHR10655:SF22">
    <property type="entry name" value="ACYL-PROTEIN THIOESTERASE 1"/>
    <property type="match status" value="1"/>
</dbReference>
<dbReference type="PANTHER" id="PTHR10655">
    <property type="entry name" value="LYSOPHOSPHOLIPASE-RELATED"/>
    <property type="match status" value="1"/>
</dbReference>
<dbReference type="Pfam" id="PF02230">
    <property type="entry name" value="Abhydrolase_2"/>
    <property type="match status" value="1"/>
</dbReference>
<dbReference type="SUPFAM" id="SSF53474">
    <property type="entry name" value="alpha/beta-Hydrolases"/>
    <property type="match status" value="1"/>
</dbReference>